<dbReference type="EMBL" id="CR522870">
    <property type="protein sequence ID" value="CAG34821.1"/>
    <property type="molecule type" value="Genomic_DNA"/>
</dbReference>
<dbReference type="RefSeq" id="WP_011187337.1">
    <property type="nucleotide sequence ID" value="NC_006138.1"/>
</dbReference>
<dbReference type="SMR" id="Q6AS54"/>
<dbReference type="STRING" id="177439.DP0092"/>
<dbReference type="KEGG" id="dps:DP0092"/>
<dbReference type="eggNOG" id="COG0864">
    <property type="taxonomic scope" value="Bacteria"/>
</dbReference>
<dbReference type="HOGENOM" id="CLU_113319_1_2_7"/>
<dbReference type="OrthoDB" id="9806294at2"/>
<dbReference type="Proteomes" id="UP000000602">
    <property type="component" value="Chromosome"/>
</dbReference>
<dbReference type="GO" id="GO:0003677">
    <property type="term" value="F:DNA binding"/>
    <property type="evidence" value="ECO:0007669"/>
    <property type="project" value="UniProtKB-KW"/>
</dbReference>
<dbReference type="GO" id="GO:0003700">
    <property type="term" value="F:DNA-binding transcription factor activity"/>
    <property type="evidence" value="ECO:0007669"/>
    <property type="project" value="UniProtKB-UniRule"/>
</dbReference>
<dbReference type="GO" id="GO:0016151">
    <property type="term" value="F:nickel cation binding"/>
    <property type="evidence" value="ECO:0007669"/>
    <property type="project" value="UniProtKB-UniRule"/>
</dbReference>
<dbReference type="GO" id="GO:0010045">
    <property type="term" value="P:response to nickel cation"/>
    <property type="evidence" value="ECO:0007669"/>
    <property type="project" value="InterPro"/>
</dbReference>
<dbReference type="CDD" id="cd22231">
    <property type="entry name" value="RHH_NikR_HicB-like"/>
    <property type="match status" value="1"/>
</dbReference>
<dbReference type="Gene3D" id="3.30.70.1150">
    <property type="entry name" value="ACT-like. Chain A, domain 2"/>
    <property type="match status" value="1"/>
</dbReference>
<dbReference type="Gene3D" id="1.10.1220.10">
    <property type="entry name" value="Met repressor-like"/>
    <property type="match status" value="1"/>
</dbReference>
<dbReference type="HAMAP" id="MF_00476">
    <property type="entry name" value="NikR"/>
    <property type="match status" value="1"/>
</dbReference>
<dbReference type="InterPro" id="IPR027271">
    <property type="entry name" value="Acetolactate_synth/TF_NikR_C"/>
</dbReference>
<dbReference type="InterPro" id="IPR045865">
    <property type="entry name" value="ACT-like_dom_sf"/>
</dbReference>
<dbReference type="InterPro" id="IPR013321">
    <property type="entry name" value="Arc_rbn_hlx_hlx"/>
</dbReference>
<dbReference type="InterPro" id="IPR002145">
    <property type="entry name" value="CopG"/>
</dbReference>
<dbReference type="InterPro" id="IPR050192">
    <property type="entry name" value="CopG/NikR_regulator"/>
</dbReference>
<dbReference type="InterPro" id="IPR022988">
    <property type="entry name" value="Ni_resp_reg_NikR"/>
</dbReference>
<dbReference type="InterPro" id="IPR010985">
    <property type="entry name" value="Ribbon_hlx_hlx"/>
</dbReference>
<dbReference type="InterPro" id="IPR014864">
    <property type="entry name" value="TF_NikR_Ni-bd_C"/>
</dbReference>
<dbReference type="NCBIfam" id="NF001884">
    <property type="entry name" value="PRK00630.1"/>
    <property type="match status" value="1"/>
</dbReference>
<dbReference type="NCBIfam" id="NF002169">
    <property type="entry name" value="PRK01002.1"/>
    <property type="match status" value="1"/>
</dbReference>
<dbReference type="NCBIfam" id="NF002815">
    <property type="entry name" value="PRK02967.1"/>
    <property type="match status" value="1"/>
</dbReference>
<dbReference type="NCBIfam" id="NF003381">
    <property type="entry name" value="PRK04460.1"/>
    <property type="match status" value="1"/>
</dbReference>
<dbReference type="PANTHER" id="PTHR34719">
    <property type="entry name" value="NICKEL-RESPONSIVE REGULATOR"/>
    <property type="match status" value="1"/>
</dbReference>
<dbReference type="PANTHER" id="PTHR34719:SF2">
    <property type="entry name" value="NICKEL-RESPONSIVE REGULATOR"/>
    <property type="match status" value="1"/>
</dbReference>
<dbReference type="Pfam" id="PF08753">
    <property type="entry name" value="NikR_C"/>
    <property type="match status" value="1"/>
</dbReference>
<dbReference type="Pfam" id="PF01402">
    <property type="entry name" value="RHH_1"/>
    <property type="match status" value="1"/>
</dbReference>
<dbReference type="SUPFAM" id="SSF55021">
    <property type="entry name" value="ACT-like"/>
    <property type="match status" value="1"/>
</dbReference>
<dbReference type="SUPFAM" id="SSF47598">
    <property type="entry name" value="Ribbon-helix-helix"/>
    <property type="match status" value="1"/>
</dbReference>
<evidence type="ECO:0000255" key="1">
    <source>
        <dbReference type="HAMAP-Rule" id="MF_00476"/>
    </source>
</evidence>
<reference key="1">
    <citation type="journal article" date="2004" name="Environ. Microbiol.">
        <title>The genome of Desulfotalea psychrophila, a sulfate-reducing bacterium from permanently cold Arctic sediments.</title>
        <authorList>
            <person name="Rabus R."/>
            <person name="Ruepp A."/>
            <person name="Frickey T."/>
            <person name="Rattei T."/>
            <person name="Fartmann B."/>
            <person name="Stark M."/>
            <person name="Bauer M."/>
            <person name="Zibat A."/>
            <person name="Lombardot T."/>
            <person name="Becker I."/>
            <person name="Amann J."/>
            <person name="Gellner K."/>
            <person name="Teeling H."/>
            <person name="Leuschner W.D."/>
            <person name="Gloeckner F.-O."/>
            <person name="Lupas A.N."/>
            <person name="Amann R."/>
            <person name="Klenk H.-P."/>
        </authorList>
    </citation>
    <scope>NUCLEOTIDE SEQUENCE [LARGE SCALE GENOMIC DNA]</scope>
    <source>
        <strain>DSM 12343 / LSv54</strain>
    </source>
</reference>
<organism>
    <name type="scientific">Desulfotalea psychrophila (strain LSv54 / DSM 12343)</name>
    <dbReference type="NCBI Taxonomy" id="177439"/>
    <lineage>
        <taxon>Bacteria</taxon>
        <taxon>Pseudomonadati</taxon>
        <taxon>Thermodesulfobacteriota</taxon>
        <taxon>Desulfobulbia</taxon>
        <taxon>Desulfobulbales</taxon>
        <taxon>Desulfocapsaceae</taxon>
        <taxon>Desulfotalea</taxon>
    </lineage>
</organism>
<accession>Q6AS54</accession>
<proteinExistence type="inferred from homology"/>
<keyword id="KW-0238">DNA-binding</keyword>
<keyword id="KW-0479">Metal-binding</keyword>
<keyword id="KW-0533">Nickel</keyword>
<keyword id="KW-1185">Reference proteome</keyword>
<keyword id="KW-0804">Transcription</keyword>
<keyword id="KW-0805">Transcription regulation</keyword>
<protein>
    <recommendedName>
        <fullName evidence="1">Putative nickel-responsive regulator</fullName>
    </recommendedName>
</protein>
<comment type="function">
    <text evidence="1">Transcriptional regulator.</text>
</comment>
<comment type="cofactor">
    <cofactor evidence="1">
        <name>Ni(2+)</name>
        <dbReference type="ChEBI" id="CHEBI:49786"/>
    </cofactor>
    <text evidence="1">Binds 1 nickel ion per subunit.</text>
</comment>
<comment type="similarity">
    <text evidence="1">Belongs to the transcriptional regulatory CopG/NikR family.</text>
</comment>
<gene>
    <name type="ordered locus">DP0092</name>
</gene>
<feature type="chain" id="PRO_0000139287" description="Putative nickel-responsive regulator">
    <location>
        <begin position="1"/>
        <end position="136"/>
    </location>
</feature>
<feature type="binding site" evidence="1">
    <location>
        <position position="76"/>
    </location>
    <ligand>
        <name>Ni(2+)</name>
        <dbReference type="ChEBI" id="CHEBI:49786"/>
    </ligand>
</feature>
<feature type="binding site" evidence="1">
    <location>
        <position position="87"/>
    </location>
    <ligand>
        <name>Ni(2+)</name>
        <dbReference type="ChEBI" id="CHEBI:49786"/>
    </ligand>
</feature>
<feature type="binding site" evidence="1">
    <location>
        <position position="89"/>
    </location>
    <ligand>
        <name>Ni(2+)</name>
        <dbReference type="ChEBI" id="CHEBI:49786"/>
    </ligand>
</feature>
<feature type="binding site" evidence="1">
    <location>
        <position position="95"/>
    </location>
    <ligand>
        <name>Ni(2+)</name>
        <dbReference type="ChEBI" id="CHEBI:49786"/>
    </ligand>
</feature>
<name>NIKR_DESPS</name>
<sequence>MLKRFSISLDDNLLEIFDQHIAEKAYNNRSEAIRDLIRKNFVLKEWEEDRDVMGVISLIYDHHQSQLQKKVTDLQHDFHHHIVSTTHVHMDHDNCLEVIIVKGRAGDVIELADGLAALKGVRDSNLAMNSTGKSLH</sequence>